<evidence type="ECO:0000255" key="1">
    <source>
        <dbReference type="HAMAP-Rule" id="MF_00418"/>
    </source>
</evidence>
<evidence type="ECO:0000305" key="2"/>
<protein>
    <recommendedName>
        <fullName evidence="1">4-hydroxy-tetrahydrodipicolinate synthase</fullName>
        <shortName evidence="1">HTPA synthase</shortName>
        <ecNumber evidence="1">4.3.3.7</ecNumber>
    </recommendedName>
</protein>
<comment type="function">
    <text evidence="1">Catalyzes the condensation of (S)-aspartate-beta-semialdehyde [(S)-ASA] and pyruvate to 4-hydroxy-tetrahydrodipicolinate (HTPA).</text>
</comment>
<comment type="catalytic activity">
    <reaction evidence="1">
        <text>L-aspartate 4-semialdehyde + pyruvate = (2S,4S)-4-hydroxy-2,3,4,5-tetrahydrodipicolinate + H2O + H(+)</text>
        <dbReference type="Rhea" id="RHEA:34171"/>
        <dbReference type="ChEBI" id="CHEBI:15361"/>
        <dbReference type="ChEBI" id="CHEBI:15377"/>
        <dbReference type="ChEBI" id="CHEBI:15378"/>
        <dbReference type="ChEBI" id="CHEBI:67139"/>
        <dbReference type="ChEBI" id="CHEBI:537519"/>
        <dbReference type="EC" id="4.3.3.7"/>
    </reaction>
</comment>
<comment type="pathway">
    <text evidence="1">Amino-acid biosynthesis; L-lysine biosynthesis via DAP pathway; (S)-tetrahydrodipicolinate from L-aspartate: step 3/4.</text>
</comment>
<comment type="subunit">
    <text evidence="1">Homotetramer; dimer of dimers.</text>
</comment>
<comment type="subcellular location">
    <subcellularLocation>
        <location evidence="1">Cytoplasm</location>
    </subcellularLocation>
</comment>
<comment type="similarity">
    <text evidence="1">Belongs to the DapA family.</text>
</comment>
<comment type="caution">
    <text evidence="2">Was originally thought to be a dihydrodipicolinate synthase (DHDPS), catalyzing the condensation of (S)-aspartate-beta-semialdehyde [(S)-ASA] and pyruvate to dihydrodipicolinate (DHDP). However, it was shown in E.coli that the product of the enzymatic reaction is not dihydrodipicolinate but in fact (4S)-4-hydroxy-2,3,4,5-tetrahydro-(2S)-dipicolinic acid (HTPA), and that the consecutive dehydration reaction leading to DHDP is not spontaneous but catalyzed by DapB.</text>
</comment>
<feature type="chain" id="PRO_0000103085" description="4-hydroxy-tetrahydrodipicolinate synthase">
    <location>
        <begin position="1"/>
        <end position="301"/>
    </location>
</feature>
<feature type="active site" description="Proton donor/acceptor" evidence="1">
    <location>
        <position position="143"/>
    </location>
</feature>
<feature type="active site" description="Schiff-base intermediate with substrate" evidence="1">
    <location>
        <position position="171"/>
    </location>
</feature>
<feature type="binding site" evidence="1">
    <location>
        <position position="57"/>
    </location>
    <ligand>
        <name>pyruvate</name>
        <dbReference type="ChEBI" id="CHEBI:15361"/>
    </ligand>
</feature>
<feature type="binding site" evidence="1">
    <location>
        <position position="211"/>
    </location>
    <ligand>
        <name>pyruvate</name>
        <dbReference type="ChEBI" id="CHEBI:15361"/>
    </ligand>
</feature>
<feature type="site" description="Part of a proton relay during catalysis" evidence="1">
    <location>
        <position position="56"/>
    </location>
</feature>
<feature type="site" description="Part of a proton relay during catalysis" evidence="1">
    <location>
        <position position="117"/>
    </location>
</feature>
<sequence length="301" mass="31850">MSEHDMHLLDSAPFGRILPAMVTPMKSDGSVDFAAAQKLAKYLVADGADGLVVNGTTGESPVTHMDEKVELVRAVKEVVDVPVISGAGSNDTAHTVRMVEQTQEAGADAVLVVMPYYSRPSQDGIVGHYKAVDESAEKPIIVYDVPGRTGLKVKVGTYDRLAELEHVKAVKDATGDLAAAVEKQQRTGLAWYSGDDGLFLPFLSIGAVGIISVIAHVASNPMQQLVQAFDRGDITTARRLANQLAPLVHALNGDGYQAVMAKAALKVKGVIPSTTMRLPNIGPDATQLDKAEEGMRAAGLL</sequence>
<keyword id="KW-0028">Amino-acid biosynthesis</keyword>
<keyword id="KW-0963">Cytoplasm</keyword>
<keyword id="KW-0220">Diaminopimelate biosynthesis</keyword>
<keyword id="KW-0456">Lyase</keyword>
<keyword id="KW-0457">Lysine biosynthesis</keyword>
<keyword id="KW-1185">Reference proteome</keyword>
<keyword id="KW-0704">Schiff base</keyword>
<proteinExistence type="inferred from homology"/>
<dbReference type="EC" id="4.3.3.7" evidence="1"/>
<dbReference type="EMBL" id="AE014295">
    <property type="protein sequence ID" value="AAN24998.1"/>
    <property type="molecule type" value="Genomic_DNA"/>
</dbReference>
<dbReference type="RefSeq" id="NP_696362.1">
    <property type="nucleotide sequence ID" value="NC_004307.2"/>
</dbReference>
<dbReference type="RefSeq" id="WP_007053723.1">
    <property type="nucleotide sequence ID" value="NC_004307.2"/>
</dbReference>
<dbReference type="SMR" id="Q8G527"/>
<dbReference type="STRING" id="206672.BL1193"/>
<dbReference type="EnsemblBacteria" id="AAN24998">
    <property type="protein sequence ID" value="AAN24998"/>
    <property type="gene ID" value="BL1193"/>
</dbReference>
<dbReference type="KEGG" id="blo:BL1193"/>
<dbReference type="PATRIC" id="fig|206672.9.peg.906"/>
<dbReference type="HOGENOM" id="CLU_049343_7_1_11"/>
<dbReference type="OrthoDB" id="9782828at2"/>
<dbReference type="PhylomeDB" id="Q8G527"/>
<dbReference type="UniPathway" id="UPA00034">
    <property type="reaction ID" value="UER00017"/>
</dbReference>
<dbReference type="Proteomes" id="UP000000439">
    <property type="component" value="Chromosome"/>
</dbReference>
<dbReference type="GO" id="GO:0005829">
    <property type="term" value="C:cytosol"/>
    <property type="evidence" value="ECO:0007669"/>
    <property type="project" value="TreeGrafter"/>
</dbReference>
<dbReference type="GO" id="GO:0008840">
    <property type="term" value="F:4-hydroxy-tetrahydrodipicolinate synthase activity"/>
    <property type="evidence" value="ECO:0007669"/>
    <property type="project" value="UniProtKB-UniRule"/>
</dbReference>
<dbReference type="GO" id="GO:0019877">
    <property type="term" value="P:diaminopimelate biosynthetic process"/>
    <property type="evidence" value="ECO:0007669"/>
    <property type="project" value="UniProtKB-UniRule"/>
</dbReference>
<dbReference type="GO" id="GO:0009089">
    <property type="term" value="P:lysine biosynthetic process via diaminopimelate"/>
    <property type="evidence" value="ECO:0007669"/>
    <property type="project" value="UniProtKB-UniRule"/>
</dbReference>
<dbReference type="CDD" id="cd00950">
    <property type="entry name" value="DHDPS"/>
    <property type="match status" value="1"/>
</dbReference>
<dbReference type="Gene3D" id="3.20.20.70">
    <property type="entry name" value="Aldolase class I"/>
    <property type="match status" value="1"/>
</dbReference>
<dbReference type="HAMAP" id="MF_00418">
    <property type="entry name" value="DapA"/>
    <property type="match status" value="1"/>
</dbReference>
<dbReference type="InterPro" id="IPR013785">
    <property type="entry name" value="Aldolase_TIM"/>
</dbReference>
<dbReference type="InterPro" id="IPR005263">
    <property type="entry name" value="DapA"/>
</dbReference>
<dbReference type="InterPro" id="IPR002220">
    <property type="entry name" value="DapA-like"/>
</dbReference>
<dbReference type="InterPro" id="IPR020625">
    <property type="entry name" value="Schiff_base-form_aldolases_AS"/>
</dbReference>
<dbReference type="InterPro" id="IPR020624">
    <property type="entry name" value="Schiff_base-form_aldolases_CS"/>
</dbReference>
<dbReference type="NCBIfam" id="TIGR00674">
    <property type="entry name" value="dapA"/>
    <property type="match status" value="1"/>
</dbReference>
<dbReference type="PANTHER" id="PTHR12128:SF66">
    <property type="entry name" value="4-HYDROXY-2-OXOGLUTARATE ALDOLASE, MITOCHONDRIAL"/>
    <property type="match status" value="1"/>
</dbReference>
<dbReference type="PANTHER" id="PTHR12128">
    <property type="entry name" value="DIHYDRODIPICOLINATE SYNTHASE"/>
    <property type="match status" value="1"/>
</dbReference>
<dbReference type="Pfam" id="PF00701">
    <property type="entry name" value="DHDPS"/>
    <property type="match status" value="1"/>
</dbReference>
<dbReference type="PIRSF" id="PIRSF001365">
    <property type="entry name" value="DHDPS"/>
    <property type="match status" value="1"/>
</dbReference>
<dbReference type="PRINTS" id="PR00146">
    <property type="entry name" value="DHPICSNTHASE"/>
</dbReference>
<dbReference type="SMART" id="SM01130">
    <property type="entry name" value="DHDPS"/>
    <property type="match status" value="1"/>
</dbReference>
<dbReference type="SUPFAM" id="SSF51569">
    <property type="entry name" value="Aldolase"/>
    <property type="match status" value="1"/>
</dbReference>
<dbReference type="PROSITE" id="PS00665">
    <property type="entry name" value="DHDPS_1"/>
    <property type="match status" value="1"/>
</dbReference>
<dbReference type="PROSITE" id="PS00666">
    <property type="entry name" value="DHDPS_2"/>
    <property type="match status" value="1"/>
</dbReference>
<reference key="1">
    <citation type="journal article" date="2002" name="Proc. Natl. Acad. Sci. U.S.A.">
        <title>The genome sequence of Bifidobacterium longum reflects its adaptation to the human gastrointestinal tract.</title>
        <authorList>
            <person name="Schell M.A."/>
            <person name="Karmirantzou M."/>
            <person name="Snel B."/>
            <person name="Vilanova D."/>
            <person name="Berger B."/>
            <person name="Pessi G."/>
            <person name="Zwahlen M.-C."/>
            <person name="Desiere F."/>
            <person name="Bork P."/>
            <person name="Delley M."/>
            <person name="Pridmore R.D."/>
            <person name="Arigoni F."/>
        </authorList>
    </citation>
    <scope>NUCLEOTIDE SEQUENCE [LARGE SCALE GENOMIC DNA]</scope>
    <source>
        <strain>NCC 2705</strain>
    </source>
</reference>
<organism>
    <name type="scientific">Bifidobacterium longum (strain NCC 2705)</name>
    <dbReference type="NCBI Taxonomy" id="206672"/>
    <lineage>
        <taxon>Bacteria</taxon>
        <taxon>Bacillati</taxon>
        <taxon>Actinomycetota</taxon>
        <taxon>Actinomycetes</taxon>
        <taxon>Bifidobacteriales</taxon>
        <taxon>Bifidobacteriaceae</taxon>
        <taxon>Bifidobacterium</taxon>
    </lineage>
</organism>
<accession>Q8G527</accession>
<gene>
    <name evidence="1" type="primary">dapA</name>
    <name type="ordered locus">BL1193</name>
</gene>
<name>DAPA_BIFLO</name>